<dbReference type="EMBL" id="CP000708">
    <property type="protein sequence ID" value="ABQ61627.1"/>
    <property type="molecule type" value="Genomic_DNA"/>
</dbReference>
<dbReference type="RefSeq" id="WP_004688461.1">
    <property type="nucleotide sequence ID" value="NC_009505.1"/>
</dbReference>
<dbReference type="SMR" id="A5VR06"/>
<dbReference type="GeneID" id="55590908"/>
<dbReference type="KEGG" id="bov:BOV_1196"/>
<dbReference type="HOGENOM" id="CLU_044142_2_0_5"/>
<dbReference type="Proteomes" id="UP000006383">
    <property type="component" value="Chromosome I"/>
</dbReference>
<dbReference type="GO" id="GO:0022625">
    <property type="term" value="C:cytosolic large ribosomal subunit"/>
    <property type="evidence" value="ECO:0007669"/>
    <property type="project" value="TreeGrafter"/>
</dbReference>
<dbReference type="GO" id="GO:0019843">
    <property type="term" value="F:rRNA binding"/>
    <property type="evidence" value="ECO:0007669"/>
    <property type="project" value="UniProtKB-UniRule"/>
</dbReference>
<dbReference type="GO" id="GO:0003735">
    <property type="term" value="F:structural constituent of ribosome"/>
    <property type="evidence" value="ECO:0007669"/>
    <property type="project" value="InterPro"/>
</dbReference>
<dbReference type="GO" id="GO:0006412">
    <property type="term" value="P:translation"/>
    <property type="evidence" value="ECO:0007669"/>
    <property type="project" value="UniProtKB-UniRule"/>
</dbReference>
<dbReference type="FunFam" id="2.40.30.10:FF:000004">
    <property type="entry name" value="50S ribosomal protein L3"/>
    <property type="match status" value="1"/>
</dbReference>
<dbReference type="FunFam" id="3.30.160.810:FF:000001">
    <property type="entry name" value="50S ribosomal protein L3"/>
    <property type="match status" value="1"/>
</dbReference>
<dbReference type="Gene3D" id="3.30.160.810">
    <property type="match status" value="1"/>
</dbReference>
<dbReference type="Gene3D" id="2.40.30.10">
    <property type="entry name" value="Translation factors"/>
    <property type="match status" value="1"/>
</dbReference>
<dbReference type="HAMAP" id="MF_01325_B">
    <property type="entry name" value="Ribosomal_uL3_B"/>
    <property type="match status" value="1"/>
</dbReference>
<dbReference type="InterPro" id="IPR000597">
    <property type="entry name" value="Ribosomal_uL3"/>
</dbReference>
<dbReference type="InterPro" id="IPR019927">
    <property type="entry name" value="Ribosomal_uL3_bac/org-type"/>
</dbReference>
<dbReference type="InterPro" id="IPR019926">
    <property type="entry name" value="Ribosomal_uL3_CS"/>
</dbReference>
<dbReference type="InterPro" id="IPR009000">
    <property type="entry name" value="Transl_B-barrel_sf"/>
</dbReference>
<dbReference type="NCBIfam" id="TIGR03625">
    <property type="entry name" value="L3_bact"/>
    <property type="match status" value="1"/>
</dbReference>
<dbReference type="PANTHER" id="PTHR11229">
    <property type="entry name" value="50S RIBOSOMAL PROTEIN L3"/>
    <property type="match status" value="1"/>
</dbReference>
<dbReference type="PANTHER" id="PTHR11229:SF16">
    <property type="entry name" value="LARGE RIBOSOMAL SUBUNIT PROTEIN UL3C"/>
    <property type="match status" value="1"/>
</dbReference>
<dbReference type="Pfam" id="PF00297">
    <property type="entry name" value="Ribosomal_L3"/>
    <property type="match status" value="1"/>
</dbReference>
<dbReference type="SUPFAM" id="SSF50447">
    <property type="entry name" value="Translation proteins"/>
    <property type="match status" value="1"/>
</dbReference>
<dbReference type="PROSITE" id="PS00474">
    <property type="entry name" value="RIBOSOMAL_L3"/>
    <property type="match status" value="1"/>
</dbReference>
<keyword id="KW-0488">Methylation</keyword>
<keyword id="KW-0687">Ribonucleoprotein</keyword>
<keyword id="KW-0689">Ribosomal protein</keyword>
<keyword id="KW-0694">RNA-binding</keyword>
<keyword id="KW-0699">rRNA-binding</keyword>
<sequence>MRSGVIAQKLGMTRVYNDAGEHVPVTVLRMENCHVVAQRTVEKNGYTAVQLGVGMAKVKNTSKAMRGHFAKAEVEPKAKLAEFRVSPDNLLEVGVEITAEHFVAGQKVDVTGTSIGKGFAGVMKRHNFGGHRASHGNSITHRSHGSTGQRQDPGKVFKGKKMAGHMGQTRVTTQNIEVVSTDSDRGLILVRGAVPGSKGAWILVRDAVKASLPENAPKPAGLRAGAKAEAAATEGAE</sequence>
<comment type="function">
    <text evidence="1">One of the primary rRNA binding proteins, it binds directly near the 3'-end of the 23S rRNA, where it nucleates assembly of the 50S subunit.</text>
</comment>
<comment type="subunit">
    <text evidence="1">Part of the 50S ribosomal subunit. Forms a cluster with proteins L14 and L19.</text>
</comment>
<comment type="PTM">
    <text evidence="1">Methylated by PrmB.</text>
</comment>
<comment type="similarity">
    <text evidence="1">Belongs to the universal ribosomal protein uL3 family.</text>
</comment>
<evidence type="ECO:0000255" key="1">
    <source>
        <dbReference type="HAMAP-Rule" id="MF_01325"/>
    </source>
</evidence>
<evidence type="ECO:0000256" key="2">
    <source>
        <dbReference type="SAM" id="MobiDB-lite"/>
    </source>
</evidence>
<evidence type="ECO:0000305" key="3"/>
<feature type="chain" id="PRO_1000052017" description="Large ribosomal subunit protein uL3">
    <location>
        <begin position="1"/>
        <end position="237"/>
    </location>
</feature>
<feature type="region of interest" description="Disordered" evidence="2">
    <location>
        <begin position="133"/>
        <end position="155"/>
    </location>
</feature>
<feature type="region of interest" description="Disordered" evidence="2">
    <location>
        <begin position="213"/>
        <end position="237"/>
    </location>
</feature>
<feature type="compositionally biased region" description="Polar residues" evidence="2">
    <location>
        <begin position="135"/>
        <end position="150"/>
    </location>
</feature>
<feature type="compositionally biased region" description="Low complexity" evidence="2">
    <location>
        <begin position="220"/>
        <end position="237"/>
    </location>
</feature>
<feature type="modified residue" description="N5-methylglutamine" evidence="1">
    <location>
        <position position="151"/>
    </location>
</feature>
<name>RL3_BRUO2</name>
<organism>
    <name type="scientific">Brucella ovis (strain ATCC 25840 / 63/290 / NCTC 10512)</name>
    <dbReference type="NCBI Taxonomy" id="444178"/>
    <lineage>
        <taxon>Bacteria</taxon>
        <taxon>Pseudomonadati</taxon>
        <taxon>Pseudomonadota</taxon>
        <taxon>Alphaproteobacteria</taxon>
        <taxon>Hyphomicrobiales</taxon>
        <taxon>Brucellaceae</taxon>
        <taxon>Brucella/Ochrobactrum group</taxon>
        <taxon>Brucella</taxon>
    </lineage>
</organism>
<gene>
    <name evidence="1" type="primary">rplC</name>
    <name type="ordered locus">BOV_1196</name>
</gene>
<proteinExistence type="inferred from homology"/>
<protein>
    <recommendedName>
        <fullName evidence="1">Large ribosomal subunit protein uL3</fullName>
    </recommendedName>
    <alternativeName>
        <fullName evidence="3">50S ribosomal protein L3</fullName>
    </alternativeName>
</protein>
<reference key="1">
    <citation type="journal article" date="2009" name="PLoS ONE">
        <title>Genome degradation in Brucella ovis corresponds with narrowing of its host range and tissue tropism.</title>
        <authorList>
            <person name="Tsolis R.M."/>
            <person name="Seshadri R."/>
            <person name="Santos R.L."/>
            <person name="Sangari F.J."/>
            <person name="Lobo J.M."/>
            <person name="de Jong M.F."/>
            <person name="Ren Q."/>
            <person name="Myers G."/>
            <person name="Brinkac L.M."/>
            <person name="Nelson W.C."/>
            <person name="Deboy R.T."/>
            <person name="Angiuoli S."/>
            <person name="Khouri H."/>
            <person name="Dimitrov G."/>
            <person name="Robinson J.R."/>
            <person name="Mulligan S."/>
            <person name="Walker R.L."/>
            <person name="Elzer P.E."/>
            <person name="Hassan K.A."/>
            <person name="Paulsen I.T."/>
        </authorList>
    </citation>
    <scope>NUCLEOTIDE SEQUENCE [LARGE SCALE GENOMIC DNA]</scope>
    <source>
        <strain>ATCC 25840 / 63/290 / NCTC 10512</strain>
    </source>
</reference>
<accession>A5VR06</accession>